<sequence length="745" mass="79924">MSQENTLNSGDETILAEAVAPAHAVFTLSVRPDNIGIITVDVVGDKVNTLKAKFAEQIAEILQQAQALSQLQGLVIISGKPDSFIAGADITMIAACHTAQDARILAQKGQSILAQIAAFPVPVVAAIHGACLGGGLELALACHSRICSQDDKTVLGLPEVQLGLLPGSGGTQRLPRLVGVSKALDMILTGRQVRARQALKMGLVDDVVPQDILLDVAIQRAKAGWLDKPALPWQERLLSGPLGKALLFNIVRKKTQAKTKGHYPAAERIIDVVRKGLDHGGPAGYEAEAKAFGELAMTPESAALRSLFFATTSLKKESGGKAQPRAIHRVGVLGGGLMGGGIANVTATRAGLPVRIKDINPTGINQALKYTWDTLGKRVRSKRMRPAERQRQMMLISGSTDYCGFGNVDIVVEAVFEDLSLKQQMVADIEHFAAPHTIFASNTSSLPISDIAAQAQRPEQVIGLHYFSPVDKMPLVEVIPHAKTSEETIATTVALARKQGKTAIVVADRAGFYVNRILAPYINEAARCLLDGEPIASVDKALVDFGFPVGPITLLDEVGIDVGTKIIPILVEKLGARFAAPPSFDVILKDGRKGRKNGRGFYLYPAKSSGFKWKRSPVKQVDTSVYTLLGVTPKAHLESAVIAQRCTMMMLNEAARCLDESIIRNPRDGDIGAVFGIGFPPFLGGPFRYMDSLGADKVVKTLNLLAQQYGERFEPCSLLVTMAGQQKRFYPPENSLDEAAITAHN</sequence>
<gene>
    <name evidence="1" type="primary">fadJ</name>
    <name type="synonym">faoA</name>
    <name type="ordered locus">YE1277</name>
</gene>
<organism>
    <name type="scientific">Yersinia enterocolitica serotype O:8 / biotype 1B (strain NCTC 13174 / 8081)</name>
    <dbReference type="NCBI Taxonomy" id="393305"/>
    <lineage>
        <taxon>Bacteria</taxon>
        <taxon>Pseudomonadati</taxon>
        <taxon>Pseudomonadota</taxon>
        <taxon>Gammaproteobacteria</taxon>
        <taxon>Enterobacterales</taxon>
        <taxon>Yersiniaceae</taxon>
        <taxon>Yersinia</taxon>
    </lineage>
</organism>
<accession>A1JK30</accession>
<evidence type="ECO:0000255" key="1">
    <source>
        <dbReference type="HAMAP-Rule" id="MF_01617"/>
    </source>
</evidence>
<evidence type="ECO:0000305" key="2"/>
<reference key="1">
    <citation type="journal article" date="2006" name="PLoS Genet.">
        <title>The complete genome sequence and comparative genome analysis of the high pathogenicity Yersinia enterocolitica strain 8081.</title>
        <authorList>
            <person name="Thomson N.R."/>
            <person name="Howard S."/>
            <person name="Wren B.W."/>
            <person name="Holden M.T.G."/>
            <person name="Crossman L."/>
            <person name="Challis G.L."/>
            <person name="Churcher C."/>
            <person name="Mungall K."/>
            <person name="Brooks K."/>
            <person name="Chillingworth T."/>
            <person name="Feltwell T."/>
            <person name="Abdellah Z."/>
            <person name="Hauser H."/>
            <person name="Jagels K."/>
            <person name="Maddison M."/>
            <person name="Moule S."/>
            <person name="Sanders M."/>
            <person name="Whitehead S."/>
            <person name="Quail M.A."/>
            <person name="Dougan G."/>
            <person name="Parkhill J."/>
            <person name="Prentice M.B."/>
        </authorList>
    </citation>
    <scope>NUCLEOTIDE SEQUENCE [LARGE SCALE GENOMIC DNA]</scope>
    <source>
        <strain>NCTC 13174 / 8081</strain>
    </source>
</reference>
<protein>
    <recommendedName>
        <fullName evidence="1">Fatty acid oxidation complex subunit alpha</fullName>
    </recommendedName>
    <domain>
        <recommendedName>
            <fullName evidence="1">Enoyl-CoA hydratase/3-hydroxybutyryl-CoA epimerase</fullName>
            <ecNumber evidence="1">4.2.1.17</ecNumber>
            <ecNumber evidence="1">5.1.2.3</ecNumber>
        </recommendedName>
    </domain>
    <domain>
        <recommendedName>
            <fullName evidence="1">3-hydroxyacyl-CoA dehydrogenase</fullName>
            <ecNumber evidence="1">1.1.1.35</ecNumber>
        </recommendedName>
    </domain>
</protein>
<name>FADJ_YERE8</name>
<keyword id="KW-0963">Cytoplasm</keyword>
<keyword id="KW-0276">Fatty acid metabolism</keyword>
<keyword id="KW-0413">Isomerase</keyword>
<keyword id="KW-0442">Lipid degradation</keyword>
<keyword id="KW-0443">Lipid metabolism</keyword>
<keyword id="KW-0456">Lyase</keyword>
<keyword id="KW-0511">Multifunctional enzyme</keyword>
<keyword id="KW-0520">NAD</keyword>
<keyword id="KW-0560">Oxidoreductase</keyword>
<dbReference type="EC" id="4.2.1.17" evidence="1"/>
<dbReference type="EC" id="5.1.2.3" evidence="1"/>
<dbReference type="EC" id="1.1.1.35" evidence="1"/>
<dbReference type="EMBL" id="AM286415">
    <property type="protein sequence ID" value="CAL11369.1"/>
    <property type="status" value="ALT_INIT"/>
    <property type="molecule type" value="Genomic_DNA"/>
</dbReference>
<dbReference type="RefSeq" id="WP_042661366.1">
    <property type="nucleotide sequence ID" value="NC_008800.1"/>
</dbReference>
<dbReference type="RefSeq" id="YP_001005598.1">
    <property type="nucleotide sequence ID" value="NC_008800.1"/>
</dbReference>
<dbReference type="SMR" id="A1JK30"/>
<dbReference type="KEGG" id="yen:YE1277"/>
<dbReference type="PATRIC" id="fig|393305.7.peg.1387"/>
<dbReference type="eggNOG" id="COG1024">
    <property type="taxonomic scope" value="Bacteria"/>
</dbReference>
<dbReference type="eggNOG" id="COG1250">
    <property type="taxonomic scope" value="Bacteria"/>
</dbReference>
<dbReference type="HOGENOM" id="CLU_009834_16_3_6"/>
<dbReference type="OrthoDB" id="5389341at2"/>
<dbReference type="UniPathway" id="UPA00659"/>
<dbReference type="Proteomes" id="UP000000642">
    <property type="component" value="Chromosome"/>
</dbReference>
<dbReference type="GO" id="GO:0005737">
    <property type="term" value="C:cytoplasm"/>
    <property type="evidence" value="ECO:0007669"/>
    <property type="project" value="UniProtKB-SubCell"/>
</dbReference>
<dbReference type="GO" id="GO:0008692">
    <property type="term" value="F:3-hydroxybutyryl-CoA epimerase activity"/>
    <property type="evidence" value="ECO:0007669"/>
    <property type="project" value="UniProtKB-UniRule"/>
</dbReference>
<dbReference type="GO" id="GO:0004300">
    <property type="term" value="F:enoyl-CoA hydratase activity"/>
    <property type="evidence" value="ECO:0007669"/>
    <property type="project" value="UniProtKB-UniRule"/>
</dbReference>
<dbReference type="GO" id="GO:0016509">
    <property type="term" value="F:long-chain-3-hydroxyacyl-CoA dehydrogenase activity"/>
    <property type="evidence" value="ECO:0007669"/>
    <property type="project" value="TreeGrafter"/>
</dbReference>
<dbReference type="GO" id="GO:0070403">
    <property type="term" value="F:NAD+ binding"/>
    <property type="evidence" value="ECO:0007669"/>
    <property type="project" value="InterPro"/>
</dbReference>
<dbReference type="GO" id="GO:0006635">
    <property type="term" value="P:fatty acid beta-oxidation"/>
    <property type="evidence" value="ECO:0007669"/>
    <property type="project" value="UniProtKB-UniRule"/>
</dbReference>
<dbReference type="CDD" id="cd06558">
    <property type="entry name" value="crotonase-like"/>
    <property type="match status" value="1"/>
</dbReference>
<dbReference type="FunFam" id="1.10.1040.50:FF:000003">
    <property type="entry name" value="Fatty acid oxidation complex subunit alpha"/>
    <property type="match status" value="1"/>
</dbReference>
<dbReference type="FunFam" id="3.90.226.10:FF:000011">
    <property type="entry name" value="Fatty acid oxidation complex subunit alpha"/>
    <property type="match status" value="1"/>
</dbReference>
<dbReference type="FunFam" id="3.40.50.720:FF:000009">
    <property type="entry name" value="Fatty oxidation complex, alpha subunit"/>
    <property type="match status" value="1"/>
</dbReference>
<dbReference type="Gene3D" id="1.10.1040.50">
    <property type="match status" value="1"/>
</dbReference>
<dbReference type="Gene3D" id="3.90.226.10">
    <property type="entry name" value="2-enoyl-CoA Hydratase, Chain A, domain 1"/>
    <property type="match status" value="1"/>
</dbReference>
<dbReference type="Gene3D" id="3.40.50.720">
    <property type="entry name" value="NAD(P)-binding Rossmann-like Domain"/>
    <property type="match status" value="1"/>
</dbReference>
<dbReference type="HAMAP" id="MF_01617">
    <property type="entry name" value="FadJ"/>
    <property type="match status" value="1"/>
</dbReference>
<dbReference type="InterPro" id="IPR006180">
    <property type="entry name" value="3-OHacyl-CoA_DH_CS"/>
</dbReference>
<dbReference type="InterPro" id="IPR006176">
    <property type="entry name" value="3-OHacyl-CoA_DH_NAD-bd"/>
</dbReference>
<dbReference type="InterPro" id="IPR006108">
    <property type="entry name" value="3HC_DH_C"/>
</dbReference>
<dbReference type="InterPro" id="IPR008927">
    <property type="entry name" value="6-PGluconate_DH-like_C_sf"/>
</dbReference>
<dbReference type="InterPro" id="IPR029045">
    <property type="entry name" value="ClpP/crotonase-like_dom_sf"/>
</dbReference>
<dbReference type="InterPro" id="IPR001753">
    <property type="entry name" value="Enoyl-CoA_hydra/iso"/>
</dbReference>
<dbReference type="InterPro" id="IPR050136">
    <property type="entry name" value="FA_oxidation_alpha_subunit"/>
</dbReference>
<dbReference type="InterPro" id="IPR012802">
    <property type="entry name" value="FadJ"/>
</dbReference>
<dbReference type="InterPro" id="IPR036291">
    <property type="entry name" value="NAD(P)-bd_dom_sf"/>
</dbReference>
<dbReference type="NCBIfam" id="TIGR02440">
    <property type="entry name" value="FadJ"/>
    <property type="match status" value="1"/>
</dbReference>
<dbReference type="NCBIfam" id="NF008363">
    <property type="entry name" value="PRK11154.1"/>
    <property type="match status" value="1"/>
</dbReference>
<dbReference type="PANTHER" id="PTHR43612">
    <property type="entry name" value="TRIFUNCTIONAL ENZYME SUBUNIT ALPHA"/>
    <property type="match status" value="1"/>
</dbReference>
<dbReference type="PANTHER" id="PTHR43612:SF3">
    <property type="entry name" value="TRIFUNCTIONAL ENZYME SUBUNIT ALPHA, MITOCHONDRIAL"/>
    <property type="match status" value="1"/>
</dbReference>
<dbReference type="Pfam" id="PF00725">
    <property type="entry name" value="3HCDH"/>
    <property type="match status" value="2"/>
</dbReference>
<dbReference type="Pfam" id="PF02737">
    <property type="entry name" value="3HCDH_N"/>
    <property type="match status" value="1"/>
</dbReference>
<dbReference type="Pfam" id="PF00378">
    <property type="entry name" value="ECH_1"/>
    <property type="match status" value="1"/>
</dbReference>
<dbReference type="SUPFAM" id="SSF48179">
    <property type="entry name" value="6-phosphogluconate dehydrogenase C-terminal domain-like"/>
    <property type="match status" value="2"/>
</dbReference>
<dbReference type="SUPFAM" id="SSF52096">
    <property type="entry name" value="ClpP/crotonase"/>
    <property type="match status" value="1"/>
</dbReference>
<dbReference type="SUPFAM" id="SSF51735">
    <property type="entry name" value="NAD(P)-binding Rossmann-fold domains"/>
    <property type="match status" value="1"/>
</dbReference>
<dbReference type="PROSITE" id="PS00067">
    <property type="entry name" value="3HCDH"/>
    <property type="match status" value="1"/>
</dbReference>
<feature type="chain" id="PRO_0000323532" description="Fatty acid oxidation complex subunit alpha">
    <location>
        <begin position="1"/>
        <end position="745"/>
    </location>
</feature>
<feature type="region of interest" description="Enoyl-CoA hydratase" evidence="1">
    <location>
        <begin position="47"/>
        <end position="209"/>
    </location>
</feature>
<feature type="region of interest" description="3-hydroxyacyl-CoA dehydrogenase" evidence="1">
    <location>
        <begin position="325"/>
        <end position="745"/>
    </location>
</feature>
<feature type="site" description="Important for catalytic activity" evidence="1">
    <location>
        <position position="137"/>
    </location>
</feature>
<feature type="site" description="Important for catalytic activity" evidence="1">
    <location>
        <position position="159"/>
    </location>
</feature>
<comment type="function">
    <text evidence="1">Catalyzes the formation of a hydroxyacyl-CoA by addition of water on enoyl-CoA. Also exhibits 3-hydroxyacyl-CoA epimerase and 3-hydroxyacyl-CoA dehydrogenase activities.</text>
</comment>
<comment type="catalytic activity">
    <reaction evidence="1">
        <text>a (3S)-3-hydroxyacyl-CoA = a (2E)-enoyl-CoA + H2O</text>
        <dbReference type="Rhea" id="RHEA:16105"/>
        <dbReference type="ChEBI" id="CHEBI:15377"/>
        <dbReference type="ChEBI" id="CHEBI:57318"/>
        <dbReference type="ChEBI" id="CHEBI:58856"/>
        <dbReference type="EC" id="4.2.1.17"/>
    </reaction>
</comment>
<comment type="catalytic activity">
    <reaction evidence="1">
        <text>a 4-saturated-(3S)-3-hydroxyacyl-CoA = a (3E)-enoyl-CoA + H2O</text>
        <dbReference type="Rhea" id="RHEA:20724"/>
        <dbReference type="ChEBI" id="CHEBI:15377"/>
        <dbReference type="ChEBI" id="CHEBI:58521"/>
        <dbReference type="ChEBI" id="CHEBI:137480"/>
        <dbReference type="EC" id="4.2.1.17"/>
    </reaction>
</comment>
<comment type="catalytic activity">
    <reaction evidence="1">
        <text>a (3S)-3-hydroxyacyl-CoA + NAD(+) = a 3-oxoacyl-CoA + NADH + H(+)</text>
        <dbReference type="Rhea" id="RHEA:22432"/>
        <dbReference type="ChEBI" id="CHEBI:15378"/>
        <dbReference type="ChEBI" id="CHEBI:57318"/>
        <dbReference type="ChEBI" id="CHEBI:57540"/>
        <dbReference type="ChEBI" id="CHEBI:57945"/>
        <dbReference type="ChEBI" id="CHEBI:90726"/>
        <dbReference type="EC" id="1.1.1.35"/>
    </reaction>
</comment>
<comment type="catalytic activity">
    <reaction evidence="1">
        <text>(3S)-3-hydroxybutanoyl-CoA = (3R)-3-hydroxybutanoyl-CoA</text>
        <dbReference type="Rhea" id="RHEA:21760"/>
        <dbReference type="ChEBI" id="CHEBI:57315"/>
        <dbReference type="ChEBI" id="CHEBI:57316"/>
        <dbReference type="EC" id="5.1.2.3"/>
    </reaction>
</comment>
<comment type="pathway">
    <text evidence="1">Lipid metabolism; fatty acid beta-oxidation.</text>
</comment>
<comment type="subunit">
    <text evidence="1">Heterotetramer of two alpha chains (FadJ) and two beta chains (FadI).</text>
</comment>
<comment type="subcellular location">
    <subcellularLocation>
        <location evidence="1">Cytoplasm</location>
    </subcellularLocation>
</comment>
<comment type="similarity">
    <text evidence="1">In the N-terminal section; belongs to the enoyl-CoA hydratase/isomerase family.</text>
</comment>
<comment type="similarity">
    <text evidence="1">In the central section; belongs to the 3-hydroxyacyl-CoA dehydrogenase family.</text>
</comment>
<comment type="sequence caution" evidence="2">
    <conflict type="erroneous initiation">
        <sequence resource="EMBL-CDS" id="CAL11369"/>
    </conflict>
</comment>
<proteinExistence type="inferred from homology"/>